<evidence type="ECO:0000255" key="1">
    <source>
        <dbReference type="HAMAP-Rule" id="MF_00443"/>
    </source>
</evidence>
<accession>Q8Z322</accession>
<name>THIG_SALTI</name>
<gene>
    <name evidence="1" type="primary">thiG</name>
    <name type="ordered locus">STY3725</name>
    <name type="ordered locus">t3471</name>
</gene>
<protein>
    <recommendedName>
        <fullName evidence="1">Thiazole synthase</fullName>
        <ecNumber evidence="1">2.8.1.10</ecNumber>
    </recommendedName>
</protein>
<keyword id="KW-0963">Cytoplasm</keyword>
<keyword id="KW-0704">Schiff base</keyword>
<keyword id="KW-0784">Thiamine biosynthesis</keyword>
<keyword id="KW-0808">Transferase</keyword>
<dbReference type="EC" id="2.8.1.10" evidence="1"/>
<dbReference type="EMBL" id="AL513382">
    <property type="protein sequence ID" value="CAD09484.1"/>
    <property type="molecule type" value="Genomic_DNA"/>
</dbReference>
<dbReference type="EMBL" id="AE014613">
    <property type="protein sequence ID" value="AAO70987.1"/>
    <property type="molecule type" value="Genomic_DNA"/>
</dbReference>
<dbReference type="RefSeq" id="NP_457914.1">
    <property type="nucleotide sequence ID" value="NC_003198.1"/>
</dbReference>
<dbReference type="RefSeq" id="WP_000944065.1">
    <property type="nucleotide sequence ID" value="NZ_WSUR01000043.1"/>
</dbReference>
<dbReference type="SMR" id="Q8Z322"/>
<dbReference type="STRING" id="220341.gene:17587585"/>
<dbReference type="KEGG" id="stt:t3471"/>
<dbReference type="KEGG" id="sty:STY3725"/>
<dbReference type="PATRIC" id="fig|220341.7.peg.3797"/>
<dbReference type="eggNOG" id="COG2022">
    <property type="taxonomic scope" value="Bacteria"/>
</dbReference>
<dbReference type="HOGENOM" id="CLU_062233_1_0_6"/>
<dbReference type="OMA" id="PHNFQLI"/>
<dbReference type="OrthoDB" id="9805935at2"/>
<dbReference type="UniPathway" id="UPA00060"/>
<dbReference type="Proteomes" id="UP000000541">
    <property type="component" value="Chromosome"/>
</dbReference>
<dbReference type="Proteomes" id="UP000002670">
    <property type="component" value="Chromosome"/>
</dbReference>
<dbReference type="GO" id="GO:0005737">
    <property type="term" value="C:cytoplasm"/>
    <property type="evidence" value="ECO:0007669"/>
    <property type="project" value="UniProtKB-SubCell"/>
</dbReference>
<dbReference type="GO" id="GO:1990107">
    <property type="term" value="F:thiazole synthase activity"/>
    <property type="evidence" value="ECO:0007669"/>
    <property type="project" value="UniProtKB-EC"/>
</dbReference>
<dbReference type="GO" id="GO:0009229">
    <property type="term" value="P:thiamine diphosphate biosynthetic process"/>
    <property type="evidence" value="ECO:0007669"/>
    <property type="project" value="UniProtKB-UniRule"/>
</dbReference>
<dbReference type="CDD" id="cd04728">
    <property type="entry name" value="ThiG"/>
    <property type="match status" value="1"/>
</dbReference>
<dbReference type="FunFam" id="3.20.20.70:FF:000049">
    <property type="entry name" value="Thiazole synthase"/>
    <property type="match status" value="1"/>
</dbReference>
<dbReference type="Gene3D" id="3.20.20.70">
    <property type="entry name" value="Aldolase class I"/>
    <property type="match status" value="1"/>
</dbReference>
<dbReference type="HAMAP" id="MF_00443">
    <property type="entry name" value="ThiG"/>
    <property type="match status" value="1"/>
</dbReference>
<dbReference type="InterPro" id="IPR013785">
    <property type="entry name" value="Aldolase_TIM"/>
</dbReference>
<dbReference type="InterPro" id="IPR033983">
    <property type="entry name" value="Thiazole_synthase_ThiG"/>
</dbReference>
<dbReference type="InterPro" id="IPR008867">
    <property type="entry name" value="ThiG"/>
</dbReference>
<dbReference type="PANTHER" id="PTHR34266">
    <property type="entry name" value="THIAZOLE SYNTHASE"/>
    <property type="match status" value="1"/>
</dbReference>
<dbReference type="PANTHER" id="PTHR34266:SF2">
    <property type="entry name" value="THIAZOLE SYNTHASE"/>
    <property type="match status" value="1"/>
</dbReference>
<dbReference type="Pfam" id="PF05690">
    <property type="entry name" value="ThiG"/>
    <property type="match status" value="1"/>
</dbReference>
<dbReference type="SUPFAM" id="SSF110399">
    <property type="entry name" value="ThiG-like"/>
    <property type="match status" value="1"/>
</dbReference>
<proteinExistence type="inferred from homology"/>
<feature type="chain" id="PRO_0000162856" description="Thiazole synthase">
    <location>
        <begin position="1"/>
        <end position="256"/>
    </location>
</feature>
<feature type="active site" description="Schiff-base intermediate with DXP" evidence="1">
    <location>
        <position position="95"/>
    </location>
</feature>
<feature type="binding site" evidence="1">
    <location>
        <position position="156"/>
    </location>
    <ligand>
        <name>1-deoxy-D-xylulose 5-phosphate</name>
        <dbReference type="ChEBI" id="CHEBI:57792"/>
    </ligand>
</feature>
<feature type="binding site" evidence="1">
    <location>
        <begin position="182"/>
        <end position="183"/>
    </location>
    <ligand>
        <name>1-deoxy-D-xylulose 5-phosphate</name>
        <dbReference type="ChEBI" id="CHEBI:57792"/>
    </ligand>
</feature>
<feature type="binding site" evidence="1">
    <location>
        <begin position="204"/>
        <end position="205"/>
    </location>
    <ligand>
        <name>1-deoxy-D-xylulose 5-phosphate</name>
        <dbReference type="ChEBI" id="CHEBI:57792"/>
    </ligand>
</feature>
<sequence length="256" mass="26782">MLRIADKTFDSHLFTGTGKFASSQLMVEAIRASGSQLVTLAMKRVDLRQHNDAILAPLIEAGVTLLPNTSGAKTAEEAIFAAQLALEALGTHWLKLEIHPDARWLLPDPIETLKAAEALVKQGFVVLPYCGADPVLCKRLEEVGCAAVMPLGAPIGSNQGLETKAMLEIIIQQATVPVVVDAGIGVPSHAAQALEMGADAVLVNTAIAVADDPVMMATAFRLAVEAGLLARQAVPGNRSTYASATSPLTGFLEALA</sequence>
<reference key="1">
    <citation type="journal article" date="2001" name="Nature">
        <title>Complete genome sequence of a multiple drug resistant Salmonella enterica serovar Typhi CT18.</title>
        <authorList>
            <person name="Parkhill J."/>
            <person name="Dougan G."/>
            <person name="James K.D."/>
            <person name="Thomson N.R."/>
            <person name="Pickard D."/>
            <person name="Wain J."/>
            <person name="Churcher C.M."/>
            <person name="Mungall K.L."/>
            <person name="Bentley S.D."/>
            <person name="Holden M.T.G."/>
            <person name="Sebaihia M."/>
            <person name="Baker S."/>
            <person name="Basham D."/>
            <person name="Brooks K."/>
            <person name="Chillingworth T."/>
            <person name="Connerton P."/>
            <person name="Cronin A."/>
            <person name="Davis P."/>
            <person name="Davies R.M."/>
            <person name="Dowd L."/>
            <person name="White N."/>
            <person name="Farrar J."/>
            <person name="Feltwell T."/>
            <person name="Hamlin N."/>
            <person name="Haque A."/>
            <person name="Hien T.T."/>
            <person name="Holroyd S."/>
            <person name="Jagels K."/>
            <person name="Krogh A."/>
            <person name="Larsen T.S."/>
            <person name="Leather S."/>
            <person name="Moule S."/>
            <person name="O'Gaora P."/>
            <person name="Parry C."/>
            <person name="Quail M.A."/>
            <person name="Rutherford K.M."/>
            <person name="Simmonds M."/>
            <person name="Skelton J."/>
            <person name="Stevens K."/>
            <person name="Whitehead S."/>
            <person name="Barrell B.G."/>
        </authorList>
    </citation>
    <scope>NUCLEOTIDE SEQUENCE [LARGE SCALE GENOMIC DNA]</scope>
    <source>
        <strain>CT18</strain>
    </source>
</reference>
<reference key="2">
    <citation type="journal article" date="2003" name="J. Bacteriol.">
        <title>Comparative genomics of Salmonella enterica serovar Typhi strains Ty2 and CT18.</title>
        <authorList>
            <person name="Deng W."/>
            <person name="Liou S.-R."/>
            <person name="Plunkett G. III"/>
            <person name="Mayhew G.F."/>
            <person name="Rose D.J."/>
            <person name="Burland V."/>
            <person name="Kodoyianni V."/>
            <person name="Schwartz D.C."/>
            <person name="Blattner F.R."/>
        </authorList>
    </citation>
    <scope>NUCLEOTIDE SEQUENCE [LARGE SCALE GENOMIC DNA]</scope>
    <source>
        <strain>ATCC 700931 / Ty2</strain>
    </source>
</reference>
<organism>
    <name type="scientific">Salmonella typhi</name>
    <dbReference type="NCBI Taxonomy" id="90370"/>
    <lineage>
        <taxon>Bacteria</taxon>
        <taxon>Pseudomonadati</taxon>
        <taxon>Pseudomonadota</taxon>
        <taxon>Gammaproteobacteria</taxon>
        <taxon>Enterobacterales</taxon>
        <taxon>Enterobacteriaceae</taxon>
        <taxon>Salmonella</taxon>
    </lineage>
</organism>
<comment type="function">
    <text evidence="1">Catalyzes the rearrangement of 1-deoxy-D-xylulose 5-phosphate (DXP) to produce the thiazole phosphate moiety of thiamine. Sulfur is provided by the thiocarboxylate moiety of the carrier protein ThiS. In vitro, sulfur can be provided by H(2)S.</text>
</comment>
<comment type="catalytic activity">
    <reaction evidence="1">
        <text>[ThiS sulfur-carrier protein]-C-terminal-Gly-aminoethanethioate + 2-iminoacetate + 1-deoxy-D-xylulose 5-phosphate = [ThiS sulfur-carrier protein]-C-terminal Gly-Gly + 2-[(2R,5Z)-2-carboxy-4-methylthiazol-5(2H)-ylidene]ethyl phosphate + 2 H2O + H(+)</text>
        <dbReference type="Rhea" id="RHEA:26297"/>
        <dbReference type="Rhea" id="RHEA-COMP:12909"/>
        <dbReference type="Rhea" id="RHEA-COMP:19908"/>
        <dbReference type="ChEBI" id="CHEBI:15377"/>
        <dbReference type="ChEBI" id="CHEBI:15378"/>
        <dbReference type="ChEBI" id="CHEBI:57792"/>
        <dbReference type="ChEBI" id="CHEBI:62899"/>
        <dbReference type="ChEBI" id="CHEBI:77846"/>
        <dbReference type="ChEBI" id="CHEBI:90778"/>
        <dbReference type="ChEBI" id="CHEBI:232372"/>
        <dbReference type="EC" id="2.8.1.10"/>
    </reaction>
</comment>
<comment type="pathway">
    <text evidence="1">Cofactor biosynthesis; thiamine diphosphate biosynthesis.</text>
</comment>
<comment type="subunit">
    <text evidence="1">Homotetramer. Forms heterodimers with either ThiH or ThiS.</text>
</comment>
<comment type="subcellular location">
    <subcellularLocation>
        <location evidence="1">Cytoplasm</location>
    </subcellularLocation>
</comment>
<comment type="similarity">
    <text evidence="1">Belongs to the ThiG family.</text>
</comment>